<feature type="chain" id="PRO_1000055158" description="ATP synthase subunit beta">
    <location>
        <begin position="1"/>
        <end position="462"/>
    </location>
</feature>
<feature type="binding site" evidence="1">
    <location>
        <begin position="152"/>
        <end position="159"/>
    </location>
    <ligand>
        <name>ATP</name>
        <dbReference type="ChEBI" id="CHEBI:30616"/>
    </ligand>
</feature>
<evidence type="ECO:0000255" key="1">
    <source>
        <dbReference type="HAMAP-Rule" id="MF_01347"/>
    </source>
</evidence>
<sequence length="462" mass="49735">MSTGTVVQVIGAVVDVEFPQHAVPQVYDALKITGEGTCNGLVLEVQQQLGGGVVRTIAMGSSDGLRRGIEVENTGSAIAVPVGKATLGRIMNVLGEPVDEAGPIGEEDRYVIHRAAPSYEEQSNTTELLETGIKVIDLVCPFAKGGKVGLFGGAGVGKTVNMMELINNIAKAHSGLSVFAGVGERTREGNDFYYEMMESGVLDKVAMVYGQMNEPPGNRLRVALTGLTMAEKFRDEGKDVLLFVDNIYRYTLAGTEVSALLGRMPSAVGYQPTLAEEMGVLQERITSTKTGSITSVQAVYVPADDLTDPSPATTFAHLDATVVLSRQIASLGIYPAVDPLDSTSRQLDPLVVGQEHYDVANGVQNVLQRYKELKDIIAILGMDELSDDDKMTVSRARKIERFLSQPFHVAEVFTGSPGKYVPLKDTIRGFKGILEGEFDHVPEQAFYMVGSVDEAVEKANKK</sequence>
<accession>A1SBU0</accession>
<gene>
    <name evidence="1" type="primary">atpD</name>
    <name type="ordered locus">Sama_3644</name>
</gene>
<keyword id="KW-0066">ATP synthesis</keyword>
<keyword id="KW-0067">ATP-binding</keyword>
<keyword id="KW-0997">Cell inner membrane</keyword>
<keyword id="KW-1003">Cell membrane</keyword>
<keyword id="KW-0139">CF(1)</keyword>
<keyword id="KW-0375">Hydrogen ion transport</keyword>
<keyword id="KW-0406">Ion transport</keyword>
<keyword id="KW-0472">Membrane</keyword>
<keyword id="KW-0547">Nucleotide-binding</keyword>
<keyword id="KW-1185">Reference proteome</keyword>
<keyword id="KW-1278">Translocase</keyword>
<keyword id="KW-0813">Transport</keyword>
<reference key="1">
    <citation type="submission" date="2006-12" db="EMBL/GenBank/DDBJ databases">
        <title>Complete sequence of Shewanella amazonensis SB2B.</title>
        <authorList>
            <consortium name="US DOE Joint Genome Institute"/>
            <person name="Copeland A."/>
            <person name="Lucas S."/>
            <person name="Lapidus A."/>
            <person name="Barry K."/>
            <person name="Detter J.C."/>
            <person name="Glavina del Rio T."/>
            <person name="Hammon N."/>
            <person name="Israni S."/>
            <person name="Dalin E."/>
            <person name="Tice H."/>
            <person name="Pitluck S."/>
            <person name="Munk A.C."/>
            <person name="Brettin T."/>
            <person name="Bruce D."/>
            <person name="Han C."/>
            <person name="Tapia R."/>
            <person name="Gilna P."/>
            <person name="Schmutz J."/>
            <person name="Larimer F."/>
            <person name="Land M."/>
            <person name="Hauser L."/>
            <person name="Kyrpides N."/>
            <person name="Mikhailova N."/>
            <person name="Fredrickson J."/>
            <person name="Richardson P."/>
        </authorList>
    </citation>
    <scope>NUCLEOTIDE SEQUENCE [LARGE SCALE GENOMIC DNA]</scope>
    <source>
        <strain>ATCC BAA-1098 / SB2B</strain>
    </source>
</reference>
<name>ATPB_SHEAM</name>
<protein>
    <recommendedName>
        <fullName evidence="1">ATP synthase subunit beta</fullName>
        <ecNumber evidence="1">7.1.2.2</ecNumber>
    </recommendedName>
    <alternativeName>
        <fullName evidence="1">ATP synthase F1 sector subunit beta</fullName>
    </alternativeName>
    <alternativeName>
        <fullName evidence="1">F-ATPase subunit beta</fullName>
    </alternativeName>
</protein>
<comment type="function">
    <text evidence="1">Produces ATP from ADP in the presence of a proton gradient across the membrane. The catalytic sites are hosted primarily by the beta subunits.</text>
</comment>
<comment type="catalytic activity">
    <reaction evidence="1">
        <text>ATP + H2O + 4 H(+)(in) = ADP + phosphate + 5 H(+)(out)</text>
        <dbReference type="Rhea" id="RHEA:57720"/>
        <dbReference type="ChEBI" id="CHEBI:15377"/>
        <dbReference type="ChEBI" id="CHEBI:15378"/>
        <dbReference type="ChEBI" id="CHEBI:30616"/>
        <dbReference type="ChEBI" id="CHEBI:43474"/>
        <dbReference type="ChEBI" id="CHEBI:456216"/>
        <dbReference type="EC" id="7.1.2.2"/>
    </reaction>
</comment>
<comment type="subunit">
    <text evidence="1">F-type ATPases have 2 components, CF(1) - the catalytic core - and CF(0) - the membrane proton channel. CF(1) has five subunits: alpha(3), beta(3), gamma(1), delta(1), epsilon(1). CF(0) has three main subunits: a(1), b(2) and c(9-12). The alpha and beta chains form an alternating ring which encloses part of the gamma chain. CF(1) is attached to CF(0) by a central stalk formed by the gamma and epsilon chains, while a peripheral stalk is formed by the delta and b chains.</text>
</comment>
<comment type="subcellular location">
    <subcellularLocation>
        <location evidence="1">Cell inner membrane</location>
        <topology evidence="1">Peripheral membrane protein</topology>
    </subcellularLocation>
</comment>
<comment type="similarity">
    <text evidence="1">Belongs to the ATPase alpha/beta chains family.</text>
</comment>
<proteinExistence type="inferred from homology"/>
<dbReference type="EC" id="7.1.2.2" evidence="1"/>
<dbReference type="EMBL" id="CP000507">
    <property type="protein sequence ID" value="ABM01847.1"/>
    <property type="molecule type" value="Genomic_DNA"/>
</dbReference>
<dbReference type="RefSeq" id="WP_011761750.1">
    <property type="nucleotide sequence ID" value="NC_008700.1"/>
</dbReference>
<dbReference type="SMR" id="A1SBU0"/>
<dbReference type="STRING" id="326297.Sama_3644"/>
<dbReference type="KEGG" id="saz:Sama_3644"/>
<dbReference type="eggNOG" id="COG0055">
    <property type="taxonomic scope" value="Bacteria"/>
</dbReference>
<dbReference type="HOGENOM" id="CLU_022398_0_2_6"/>
<dbReference type="OrthoDB" id="9801639at2"/>
<dbReference type="Proteomes" id="UP000009175">
    <property type="component" value="Chromosome"/>
</dbReference>
<dbReference type="GO" id="GO:0005886">
    <property type="term" value="C:plasma membrane"/>
    <property type="evidence" value="ECO:0007669"/>
    <property type="project" value="UniProtKB-SubCell"/>
</dbReference>
<dbReference type="GO" id="GO:0045259">
    <property type="term" value="C:proton-transporting ATP synthase complex"/>
    <property type="evidence" value="ECO:0007669"/>
    <property type="project" value="UniProtKB-KW"/>
</dbReference>
<dbReference type="GO" id="GO:0005524">
    <property type="term" value="F:ATP binding"/>
    <property type="evidence" value="ECO:0007669"/>
    <property type="project" value="UniProtKB-UniRule"/>
</dbReference>
<dbReference type="GO" id="GO:0016887">
    <property type="term" value="F:ATP hydrolysis activity"/>
    <property type="evidence" value="ECO:0007669"/>
    <property type="project" value="InterPro"/>
</dbReference>
<dbReference type="GO" id="GO:0046933">
    <property type="term" value="F:proton-transporting ATP synthase activity, rotational mechanism"/>
    <property type="evidence" value="ECO:0007669"/>
    <property type="project" value="UniProtKB-UniRule"/>
</dbReference>
<dbReference type="CDD" id="cd18110">
    <property type="entry name" value="ATP-synt_F1_beta_C"/>
    <property type="match status" value="1"/>
</dbReference>
<dbReference type="CDD" id="cd18115">
    <property type="entry name" value="ATP-synt_F1_beta_N"/>
    <property type="match status" value="1"/>
</dbReference>
<dbReference type="CDD" id="cd01133">
    <property type="entry name" value="F1-ATPase_beta_CD"/>
    <property type="match status" value="1"/>
</dbReference>
<dbReference type="FunFam" id="1.10.1140.10:FF:000001">
    <property type="entry name" value="ATP synthase subunit beta"/>
    <property type="match status" value="1"/>
</dbReference>
<dbReference type="FunFam" id="2.40.10.170:FF:000003">
    <property type="entry name" value="ATP synthase subunit beta"/>
    <property type="match status" value="1"/>
</dbReference>
<dbReference type="FunFam" id="3.40.50.300:FF:000004">
    <property type="entry name" value="ATP synthase subunit beta"/>
    <property type="match status" value="1"/>
</dbReference>
<dbReference type="Gene3D" id="2.40.10.170">
    <property type="match status" value="1"/>
</dbReference>
<dbReference type="Gene3D" id="1.10.1140.10">
    <property type="entry name" value="Bovine Mitochondrial F1-atpase, Atp Synthase Beta Chain, Chain D, domain 3"/>
    <property type="match status" value="1"/>
</dbReference>
<dbReference type="Gene3D" id="3.40.50.300">
    <property type="entry name" value="P-loop containing nucleotide triphosphate hydrolases"/>
    <property type="match status" value="1"/>
</dbReference>
<dbReference type="HAMAP" id="MF_01347">
    <property type="entry name" value="ATP_synth_beta_bact"/>
    <property type="match status" value="1"/>
</dbReference>
<dbReference type="InterPro" id="IPR003593">
    <property type="entry name" value="AAA+_ATPase"/>
</dbReference>
<dbReference type="InterPro" id="IPR055190">
    <property type="entry name" value="ATP-synt_VA_C"/>
</dbReference>
<dbReference type="InterPro" id="IPR005722">
    <property type="entry name" value="ATP_synth_F1_bsu"/>
</dbReference>
<dbReference type="InterPro" id="IPR020003">
    <property type="entry name" value="ATPase_a/bsu_AS"/>
</dbReference>
<dbReference type="InterPro" id="IPR050053">
    <property type="entry name" value="ATPase_alpha/beta_chains"/>
</dbReference>
<dbReference type="InterPro" id="IPR004100">
    <property type="entry name" value="ATPase_F1/V1/A1_a/bsu_N"/>
</dbReference>
<dbReference type="InterPro" id="IPR036121">
    <property type="entry name" value="ATPase_F1/V1/A1_a/bsu_N_sf"/>
</dbReference>
<dbReference type="InterPro" id="IPR000194">
    <property type="entry name" value="ATPase_F1/V1/A1_a/bsu_nucl-bd"/>
</dbReference>
<dbReference type="InterPro" id="IPR024034">
    <property type="entry name" value="ATPase_F1/V1_b/a_C"/>
</dbReference>
<dbReference type="InterPro" id="IPR027417">
    <property type="entry name" value="P-loop_NTPase"/>
</dbReference>
<dbReference type="NCBIfam" id="TIGR01039">
    <property type="entry name" value="atpD"/>
    <property type="match status" value="1"/>
</dbReference>
<dbReference type="PANTHER" id="PTHR15184">
    <property type="entry name" value="ATP SYNTHASE"/>
    <property type="match status" value="1"/>
</dbReference>
<dbReference type="PANTHER" id="PTHR15184:SF71">
    <property type="entry name" value="ATP SYNTHASE SUBUNIT BETA, MITOCHONDRIAL"/>
    <property type="match status" value="1"/>
</dbReference>
<dbReference type="Pfam" id="PF00006">
    <property type="entry name" value="ATP-synt_ab"/>
    <property type="match status" value="1"/>
</dbReference>
<dbReference type="Pfam" id="PF02874">
    <property type="entry name" value="ATP-synt_ab_N"/>
    <property type="match status" value="1"/>
</dbReference>
<dbReference type="Pfam" id="PF22919">
    <property type="entry name" value="ATP-synt_VA_C"/>
    <property type="match status" value="1"/>
</dbReference>
<dbReference type="SMART" id="SM00382">
    <property type="entry name" value="AAA"/>
    <property type="match status" value="1"/>
</dbReference>
<dbReference type="SUPFAM" id="SSF47917">
    <property type="entry name" value="C-terminal domain of alpha and beta subunits of F1 ATP synthase"/>
    <property type="match status" value="1"/>
</dbReference>
<dbReference type="SUPFAM" id="SSF50615">
    <property type="entry name" value="N-terminal domain of alpha and beta subunits of F1 ATP synthase"/>
    <property type="match status" value="1"/>
</dbReference>
<dbReference type="SUPFAM" id="SSF52540">
    <property type="entry name" value="P-loop containing nucleoside triphosphate hydrolases"/>
    <property type="match status" value="1"/>
</dbReference>
<dbReference type="PROSITE" id="PS00152">
    <property type="entry name" value="ATPASE_ALPHA_BETA"/>
    <property type="match status" value="1"/>
</dbReference>
<organism>
    <name type="scientific">Shewanella amazonensis (strain ATCC BAA-1098 / SB2B)</name>
    <dbReference type="NCBI Taxonomy" id="326297"/>
    <lineage>
        <taxon>Bacteria</taxon>
        <taxon>Pseudomonadati</taxon>
        <taxon>Pseudomonadota</taxon>
        <taxon>Gammaproteobacteria</taxon>
        <taxon>Alteromonadales</taxon>
        <taxon>Shewanellaceae</taxon>
        <taxon>Shewanella</taxon>
    </lineage>
</organism>